<accession>Q6GCP9</accession>
<dbReference type="EC" id="1.97.1.4"/>
<dbReference type="EMBL" id="BX571857">
    <property type="protein sequence ID" value="CAG41970.1"/>
    <property type="molecule type" value="Genomic_DNA"/>
</dbReference>
<dbReference type="RefSeq" id="WP_000911657.1">
    <property type="nucleotide sequence ID" value="NC_002953.3"/>
</dbReference>
<dbReference type="SMR" id="Q6GCP9"/>
<dbReference type="KEGG" id="sas:SAS0202"/>
<dbReference type="HOGENOM" id="CLU_058969_1_1_9"/>
<dbReference type="GO" id="GO:0005737">
    <property type="term" value="C:cytoplasm"/>
    <property type="evidence" value="ECO:0007669"/>
    <property type="project" value="UniProtKB-SubCell"/>
</dbReference>
<dbReference type="GO" id="GO:0051539">
    <property type="term" value="F:4 iron, 4 sulfur cluster binding"/>
    <property type="evidence" value="ECO:0007669"/>
    <property type="project" value="UniProtKB-KW"/>
</dbReference>
<dbReference type="GO" id="GO:0043365">
    <property type="term" value="F:[formate-C-acetyltransferase]-activating enzyme activity"/>
    <property type="evidence" value="ECO:0007669"/>
    <property type="project" value="UniProtKB-EC"/>
</dbReference>
<dbReference type="GO" id="GO:0046872">
    <property type="term" value="F:metal ion binding"/>
    <property type="evidence" value="ECO:0007669"/>
    <property type="project" value="UniProtKB-KW"/>
</dbReference>
<dbReference type="GO" id="GO:0006006">
    <property type="term" value="P:glucose metabolic process"/>
    <property type="evidence" value="ECO:0007669"/>
    <property type="project" value="UniProtKB-KW"/>
</dbReference>
<dbReference type="CDD" id="cd01335">
    <property type="entry name" value="Radical_SAM"/>
    <property type="match status" value="1"/>
</dbReference>
<dbReference type="Gene3D" id="3.20.20.70">
    <property type="entry name" value="Aldolase class I"/>
    <property type="match status" value="1"/>
</dbReference>
<dbReference type="InterPro" id="IPR013785">
    <property type="entry name" value="Aldolase_TIM"/>
</dbReference>
<dbReference type="InterPro" id="IPR040074">
    <property type="entry name" value="BssD/PflA/YjjW"/>
</dbReference>
<dbReference type="InterPro" id="IPR034457">
    <property type="entry name" value="Organic_radical-activating"/>
</dbReference>
<dbReference type="InterPro" id="IPR012839">
    <property type="entry name" value="Organic_radical_activase"/>
</dbReference>
<dbReference type="InterPro" id="IPR012838">
    <property type="entry name" value="PFL1_activating"/>
</dbReference>
<dbReference type="InterPro" id="IPR034465">
    <property type="entry name" value="Pyruvate_for-lyase_activase"/>
</dbReference>
<dbReference type="InterPro" id="IPR001989">
    <property type="entry name" value="Radical_activat_CS"/>
</dbReference>
<dbReference type="InterPro" id="IPR007197">
    <property type="entry name" value="rSAM"/>
</dbReference>
<dbReference type="NCBIfam" id="TIGR02493">
    <property type="entry name" value="PFLA"/>
    <property type="match status" value="1"/>
</dbReference>
<dbReference type="PANTHER" id="PTHR30352:SF5">
    <property type="entry name" value="PYRUVATE FORMATE-LYASE 1-ACTIVATING ENZYME"/>
    <property type="match status" value="1"/>
</dbReference>
<dbReference type="PANTHER" id="PTHR30352">
    <property type="entry name" value="PYRUVATE FORMATE-LYASE-ACTIVATING ENZYME"/>
    <property type="match status" value="1"/>
</dbReference>
<dbReference type="Pfam" id="PF13353">
    <property type="entry name" value="Fer4_12"/>
    <property type="match status" value="1"/>
</dbReference>
<dbReference type="Pfam" id="PF04055">
    <property type="entry name" value="Radical_SAM"/>
    <property type="match status" value="1"/>
</dbReference>
<dbReference type="PIRSF" id="PIRSF000371">
    <property type="entry name" value="PFL_act_enz"/>
    <property type="match status" value="1"/>
</dbReference>
<dbReference type="SFLD" id="SFLDG01118">
    <property type="entry name" value="activating_enzymes__group_2"/>
    <property type="match status" value="1"/>
</dbReference>
<dbReference type="SFLD" id="SFLDF00278">
    <property type="entry name" value="pyruvate_formate-lyase_activas"/>
    <property type="match status" value="1"/>
</dbReference>
<dbReference type="SUPFAM" id="SSF102114">
    <property type="entry name" value="Radical SAM enzymes"/>
    <property type="match status" value="1"/>
</dbReference>
<dbReference type="PROSITE" id="PS01087">
    <property type="entry name" value="RADICAL_ACTIVATING"/>
    <property type="match status" value="1"/>
</dbReference>
<dbReference type="PROSITE" id="PS51918">
    <property type="entry name" value="RADICAL_SAM"/>
    <property type="match status" value="1"/>
</dbReference>
<proteinExistence type="inferred from homology"/>
<reference key="1">
    <citation type="journal article" date="2004" name="Proc. Natl. Acad. Sci. U.S.A.">
        <title>Complete genomes of two clinical Staphylococcus aureus strains: evidence for the rapid evolution of virulence and drug resistance.</title>
        <authorList>
            <person name="Holden M.T.G."/>
            <person name="Feil E.J."/>
            <person name="Lindsay J.A."/>
            <person name="Peacock S.J."/>
            <person name="Day N.P.J."/>
            <person name="Enright M.C."/>
            <person name="Foster T.J."/>
            <person name="Moore C.E."/>
            <person name="Hurst L."/>
            <person name="Atkin R."/>
            <person name="Barron A."/>
            <person name="Bason N."/>
            <person name="Bentley S.D."/>
            <person name="Chillingworth C."/>
            <person name="Chillingworth T."/>
            <person name="Churcher C."/>
            <person name="Clark L."/>
            <person name="Corton C."/>
            <person name="Cronin A."/>
            <person name="Doggett J."/>
            <person name="Dowd L."/>
            <person name="Feltwell T."/>
            <person name="Hance Z."/>
            <person name="Harris B."/>
            <person name="Hauser H."/>
            <person name="Holroyd S."/>
            <person name="Jagels K."/>
            <person name="James K.D."/>
            <person name="Lennard N."/>
            <person name="Line A."/>
            <person name="Mayes R."/>
            <person name="Moule S."/>
            <person name="Mungall K."/>
            <person name="Ormond D."/>
            <person name="Quail M.A."/>
            <person name="Rabbinowitsch E."/>
            <person name="Rutherford K.M."/>
            <person name="Sanders M."/>
            <person name="Sharp S."/>
            <person name="Simmonds M."/>
            <person name="Stevens K."/>
            <person name="Whitehead S."/>
            <person name="Barrell B.G."/>
            <person name="Spratt B.G."/>
            <person name="Parkhill J."/>
        </authorList>
    </citation>
    <scope>NUCLEOTIDE SEQUENCE [LARGE SCALE GENOMIC DNA]</scope>
    <source>
        <strain>MSSA476</strain>
    </source>
</reference>
<gene>
    <name type="primary">pflA</name>
    <name type="ordered locus">SAS0202</name>
</gene>
<name>PFLA_STAAS</name>
<evidence type="ECO:0000250" key="1"/>
<evidence type="ECO:0000250" key="2">
    <source>
        <dbReference type="UniProtKB" id="P0A9N4"/>
    </source>
</evidence>
<evidence type="ECO:0000255" key="3">
    <source>
        <dbReference type="PROSITE-ProRule" id="PRU01266"/>
    </source>
</evidence>
<evidence type="ECO:0000305" key="4"/>
<comment type="function">
    <text evidence="1">Activation of pyruvate formate-lyase under anaerobic conditions by generation of an organic free radical, using S-adenosylmethionine and reduced flavodoxin as cosubstrates to produce 5'-deoxy-adenosine.</text>
</comment>
<comment type="catalytic activity">
    <reaction>
        <text>glycyl-[formate C-acetyltransferase] + reduced [flavodoxin] + S-adenosyl-L-methionine = glycin-2-yl radical-[formate C-acetyltransferase] + semiquinone [flavodoxin] + 5'-deoxyadenosine + L-methionine + H(+)</text>
        <dbReference type="Rhea" id="RHEA:19225"/>
        <dbReference type="Rhea" id="RHEA-COMP:10622"/>
        <dbReference type="Rhea" id="RHEA-COMP:12190"/>
        <dbReference type="Rhea" id="RHEA-COMP:12191"/>
        <dbReference type="Rhea" id="RHEA-COMP:14480"/>
        <dbReference type="ChEBI" id="CHEBI:15378"/>
        <dbReference type="ChEBI" id="CHEBI:17319"/>
        <dbReference type="ChEBI" id="CHEBI:29947"/>
        <dbReference type="ChEBI" id="CHEBI:32722"/>
        <dbReference type="ChEBI" id="CHEBI:57618"/>
        <dbReference type="ChEBI" id="CHEBI:57844"/>
        <dbReference type="ChEBI" id="CHEBI:59789"/>
        <dbReference type="ChEBI" id="CHEBI:140311"/>
        <dbReference type="EC" id="1.97.1.4"/>
    </reaction>
</comment>
<comment type="cofactor">
    <cofactor evidence="1">
        <name>[4Fe-4S] cluster</name>
        <dbReference type="ChEBI" id="CHEBI:49883"/>
    </cofactor>
    <text evidence="1">Binds 1 [4Fe-4S] cluster. The cluster is coordinated with 3 cysteines and an exchangeable S-adenosyl-L-methionine.</text>
</comment>
<comment type="subcellular location">
    <subcellularLocation>
        <location evidence="1">Cytoplasm</location>
    </subcellularLocation>
</comment>
<comment type="similarity">
    <text evidence="4">Belongs to the organic radical-activating enzymes family.</text>
</comment>
<organism>
    <name type="scientific">Staphylococcus aureus (strain MSSA476)</name>
    <dbReference type="NCBI Taxonomy" id="282459"/>
    <lineage>
        <taxon>Bacteria</taxon>
        <taxon>Bacillati</taxon>
        <taxon>Bacillota</taxon>
        <taxon>Bacilli</taxon>
        <taxon>Bacillales</taxon>
        <taxon>Staphylococcaceae</taxon>
        <taxon>Staphylococcus</taxon>
    </lineage>
</organism>
<protein>
    <recommendedName>
        <fullName>Pyruvate formate-lyase-activating enzyme</fullName>
        <shortName>PFL-activating enzyme</shortName>
        <ecNumber>1.97.1.4</ecNumber>
    </recommendedName>
</protein>
<sequence>MLKGHLHSVESLGTVDGPGLRYILFTQGCLLRCLYCHNPDTWKISEPSREVTVDEMVNEILPYKPYFDASGGGVTVSGGEPLLQMPFLEKLFAELKENGVHTCLDTSAGCANDTKAFQRHFEELQKHTDLILLDIKHIDNDKHIRLTGKPNTHILNFARKLSDMKQPVWIRHVLVPGYSDDKDDLIKLGEFINSLDNVEKFEILPYHQLGVHKWKTLGIAYELEDVEAPDDEAVKAAYRYVNFKGKIPVEL</sequence>
<keyword id="KW-0004">4Fe-4S</keyword>
<keyword id="KW-0119">Carbohydrate metabolism</keyword>
<keyword id="KW-0963">Cytoplasm</keyword>
<keyword id="KW-0313">Glucose metabolism</keyword>
<keyword id="KW-0408">Iron</keyword>
<keyword id="KW-0411">Iron-sulfur</keyword>
<keyword id="KW-0479">Metal-binding</keyword>
<keyword id="KW-0560">Oxidoreductase</keyword>
<keyword id="KW-0949">S-adenosyl-L-methionine</keyword>
<feature type="chain" id="PRO_0000271715" description="Pyruvate formate-lyase-activating enzyme">
    <location>
        <begin position="1"/>
        <end position="251"/>
    </location>
</feature>
<feature type="domain" description="Radical SAM core" evidence="3">
    <location>
        <begin position="15"/>
        <end position="244"/>
    </location>
</feature>
<feature type="binding site" evidence="2">
    <location>
        <position position="29"/>
    </location>
    <ligand>
        <name>[4Fe-4S] cluster</name>
        <dbReference type="ChEBI" id="CHEBI:49883"/>
        <note>4Fe-4S-S-AdoMet</note>
    </ligand>
</feature>
<feature type="binding site" evidence="2">
    <location>
        <position position="33"/>
    </location>
    <ligand>
        <name>[4Fe-4S] cluster</name>
        <dbReference type="ChEBI" id="CHEBI:49883"/>
        <note>4Fe-4S-S-AdoMet</note>
    </ligand>
</feature>
<feature type="binding site" evidence="2">
    <location>
        <begin position="35"/>
        <end position="37"/>
    </location>
    <ligand>
        <name>S-adenosyl-L-methionine</name>
        <dbReference type="ChEBI" id="CHEBI:59789"/>
    </ligand>
</feature>
<feature type="binding site" evidence="2">
    <location>
        <position position="36"/>
    </location>
    <ligand>
        <name>[4Fe-4S] cluster</name>
        <dbReference type="ChEBI" id="CHEBI:49883"/>
        <note>4Fe-4S-S-AdoMet</note>
    </ligand>
</feature>
<feature type="binding site" evidence="2">
    <location>
        <position position="79"/>
    </location>
    <ligand>
        <name>S-adenosyl-L-methionine</name>
        <dbReference type="ChEBI" id="CHEBI:59789"/>
    </ligand>
</feature>
<feature type="binding site" evidence="2">
    <location>
        <begin position="134"/>
        <end position="136"/>
    </location>
    <ligand>
        <name>S-adenosyl-L-methionine</name>
        <dbReference type="ChEBI" id="CHEBI:59789"/>
    </ligand>
</feature>
<feature type="binding site" evidence="2">
    <location>
        <position position="207"/>
    </location>
    <ligand>
        <name>S-adenosyl-L-methionine</name>
        <dbReference type="ChEBI" id="CHEBI:59789"/>
    </ligand>
</feature>